<proteinExistence type="evidence at transcript level"/>
<evidence type="ECO:0000250" key="1">
    <source>
        <dbReference type="UniProtKB" id="Q9CYV5"/>
    </source>
</evidence>
<evidence type="ECO:0000255" key="2"/>
<evidence type="ECO:0000269" key="3">
    <source>
    </source>
</evidence>
<evidence type="ECO:0000305" key="4"/>
<evidence type="ECO:0000305" key="5">
    <source>
    </source>
</evidence>
<gene>
    <name type="primary">Tmem135</name>
</gene>
<keyword id="KW-0472">Membrane</keyword>
<keyword id="KW-0496">Mitochondrion</keyword>
<keyword id="KW-0576">Peroxisome</keyword>
<keyword id="KW-1185">Reference proteome</keyword>
<keyword id="KW-0812">Transmembrane</keyword>
<keyword id="KW-1133">Transmembrane helix</keyword>
<feature type="chain" id="PRO_0000284624" description="Transmembrane protein 135">
    <location>
        <begin position="1"/>
        <end position="458"/>
    </location>
</feature>
<feature type="transmembrane region" description="Helical" evidence="2">
    <location>
        <begin position="68"/>
        <end position="88"/>
    </location>
</feature>
<feature type="transmembrane region" description="Helical" evidence="2">
    <location>
        <begin position="96"/>
        <end position="116"/>
    </location>
</feature>
<feature type="transmembrane region" description="Helical" evidence="2">
    <location>
        <begin position="149"/>
        <end position="169"/>
    </location>
</feature>
<feature type="transmembrane region" description="Helical" evidence="2">
    <location>
        <begin position="298"/>
        <end position="318"/>
    </location>
</feature>
<feature type="transmembrane region" description="Helical" evidence="2">
    <location>
        <begin position="331"/>
        <end position="351"/>
    </location>
</feature>
<feature type="transmembrane region" description="Helical" evidence="2">
    <location>
        <begin position="377"/>
        <end position="397"/>
    </location>
</feature>
<accession>Q5U4F4</accession>
<name>TM135_RAT</name>
<reference key="1">
    <citation type="journal article" date="2004" name="Genome Res.">
        <title>The status, quality, and expansion of the NIH full-length cDNA project: the Mammalian Gene Collection (MGC).</title>
        <authorList>
            <consortium name="The MGC Project Team"/>
        </authorList>
    </citation>
    <scope>NUCLEOTIDE SEQUENCE [LARGE SCALE MRNA]</scope>
    <source>
        <tissue>Kidney</tissue>
    </source>
</reference>
<reference key="2">
    <citation type="journal article" date="2007" name="J. Biol. Chem.">
        <title>Rat liver peroxisomes after fibrate treatment: a survey using quantitative mass spectrometry.</title>
        <authorList>
            <person name="Islinger M."/>
            <person name="Lueers G.H."/>
            <person name="Li K.W."/>
            <person name="Loos M."/>
            <person name="Voelkl A."/>
        </authorList>
    </citation>
    <scope>FUNCTION</scope>
    <scope>SUBCELLULAR LOCATION</scope>
</reference>
<sequence length="458" mass="52359">MAALSKSIPHNCYEIGHTWNPSCRVSFLQITWGALEESLRIYAPLYLIAAVLRKRKLEYYLYKLLPEILQSASFLTANGALYITFFCVLRKILGKFYSWTPGFGAALPASYVAILIERKSRRGLLTIYMANLATETLFRMGVARGTITTLRNGEVLLFCITAAMYMFFFRCKDGLKGFTFSALRFIVGKEEIPTHSYSPETAYAKVEQKREKHRGTTRAMSLIALVRSLVDSICKHGPRHRCCKHYEDNCISYCIKGFIRMFSVGYLIQCCLRIPSAFRHLFTEPSRLLSLFYNKENFQLGAFLGSFVSIYKGTSCFLRWIRNLDDELHAIVAGFLAGVSMMFYKSTTISMYLASKLVETMYFKGIEAGKVPYFPQADTIIYSISTAICFHAAVMEVQNLRPSYWKFLLRLTKGRFALMNRKALDVFGTGASREFHNFIPRLDPRYTVVTPELPIDFS</sequence>
<comment type="function">
    <text evidence="1 3">Involved in mitochondrial metabolism by regulating the balance between mitochondrial fusion and fission (By similarity). May act as a regulator of mitochondrial fission that promotes DNM1L-dependent fission through activation of DNM1L (By similarity). May be involved in peroxisome organization (PubMed:17522052).</text>
</comment>
<comment type="subcellular location">
    <subcellularLocation>
        <location evidence="1">Mitochondrion membrane</location>
        <topology evidence="1">Multi-pass membrane protein</topology>
    </subcellularLocation>
    <subcellularLocation>
        <location evidence="5">Peroxisome membrane</location>
        <topology evidence="2">Multi-pass membrane protein</topology>
    </subcellularLocation>
</comment>
<comment type="similarity">
    <text evidence="4">Belongs to the TMEM135 family.</text>
</comment>
<organism>
    <name type="scientific">Rattus norvegicus</name>
    <name type="common">Rat</name>
    <dbReference type="NCBI Taxonomy" id="10116"/>
    <lineage>
        <taxon>Eukaryota</taxon>
        <taxon>Metazoa</taxon>
        <taxon>Chordata</taxon>
        <taxon>Craniata</taxon>
        <taxon>Vertebrata</taxon>
        <taxon>Euteleostomi</taxon>
        <taxon>Mammalia</taxon>
        <taxon>Eutheria</taxon>
        <taxon>Euarchontoglires</taxon>
        <taxon>Glires</taxon>
        <taxon>Rodentia</taxon>
        <taxon>Myomorpha</taxon>
        <taxon>Muroidea</taxon>
        <taxon>Muridae</taxon>
        <taxon>Murinae</taxon>
        <taxon>Rattus</taxon>
    </lineage>
</organism>
<protein>
    <recommendedName>
        <fullName>Transmembrane protein 135</fullName>
    </recommendedName>
    <alternativeName>
        <fullName evidence="1">Peroxisomal membrane protein 52</fullName>
        <shortName evidence="1">PMP52</shortName>
    </alternativeName>
</protein>
<dbReference type="EMBL" id="BC085115">
    <property type="protein sequence ID" value="AAH85115.1"/>
    <property type="molecule type" value="mRNA"/>
</dbReference>
<dbReference type="RefSeq" id="NP_001013918.1">
    <property type="nucleotide sequence ID" value="NM_001013896.1"/>
</dbReference>
<dbReference type="FunCoup" id="Q5U4F4">
    <property type="interactions" value="1865"/>
</dbReference>
<dbReference type="STRING" id="10116.ENSRNOP00000022578"/>
<dbReference type="PhosphoSitePlus" id="Q5U4F4"/>
<dbReference type="PaxDb" id="10116-ENSRNOP00000022578"/>
<dbReference type="Ensembl" id="ENSRNOT00000022578.6">
    <property type="protein sequence ID" value="ENSRNOP00000022578.4"/>
    <property type="gene ID" value="ENSRNOG00000016815.6"/>
</dbReference>
<dbReference type="GeneID" id="293098"/>
<dbReference type="KEGG" id="rno:293098"/>
<dbReference type="UCSC" id="RGD:1309948">
    <property type="organism name" value="rat"/>
</dbReference>
<dbReference type="AGR" id="RGD:1309948"/>
<dbReference type="CTD" id="65084"/>
<dbReference type="RGD" id="1309948">
    <property type="gene designation" value="Tmem135"/>
</dbReference>
<dbReference type="eggNOG" id="KOG1398">
    <property type="taxonomic scope" value="Eukaryota"/>
</dbReference>
<dbReference type="GeneTree" id="ENSGT00390000000303"/>
<dbReference type="HOGENOM" id="CLU_046474_0_0_1"/>
<dbReference type="InParanoid" id="Q5U4F4"/>
<dbReference type="OMA" id="HPWTDKC"/>
<dbReference type="OrthoDB" id="291792at2759"/>
<dbReference type="PhylomeDB" id="Q5U4F4"/>
<dbReference type="TreeFam" id="TF314580"/>
<dbReference type="PRO" id="PR:Q5U4F4"/>
<dbReference type="Proteomes" id="UP000002494">
    <property type="component" value="Chromosome 1"/>
</dbReference>
<dbReference type="Bgee" id="ENSRNOG00000016815">
    <property type="expression patterns" value="Expressed in liver and 18 other cell types or tissues"/>
</dbReference>
<dbReference type="GO" id="GO:0005811">
    <property type="term" value="C:lipid droplet"/>
    <property type="evidence" value="ECO:0000266"/>
    <property type="project" value="RGD"/>
</dbReference>
<dbReference type="GO" id="GO:0031966">
    <property type="term" value="C:mitochondrial membrane"/>
    <property type="evidence" value="ECO:0007669"/>
    <property type="project" value="UniProtKB-SubCell"/>
</dbReference>
<dbReference type="GO" id="GO:0005739">
    <property type="term" value="C:mitochondrion"/>
    <property type="evidence" value="ECO:0000250"/>
    <property type="project" value="UniProtKB"/>
</dbReference>
<dbReference type="GO" id="GO:0005778">
    <property type="term" value="C:peroxisomal membrane"/>
    <property type="evidence" value="ECO:0007669"/>
    <property type="project" value="UniProtKB-SubCell"/>
</dbReference>
<dbReference type="GO" id="GO:0005777">
    <property type="term" value="C:peroxisome"/>
    <property type="evidence" value="ECO:0000314"/>
    <property type="project" value="UniProtKB"/>
</dbReference>
<dbReference type="GO" id="GO:0005319">
    <property type="term" value="F:lipid transporter activity"/>
    <property type="evidence" value="ECO:0007669"/>
    <property type="project" value="Ensembl"/>
</dbReference>
<dbReference type="GO" id="GO:0036109">
    <property type="term" value="P:alpha-linolenic acid metabolic process"/>
    <property type="evidence" value="ECO:0007669"/>
    <property type="project" value="Ensembl"/>
</dbReference>
<dbReference type="GO" id="GO:1901570">
    <property type="term" value="P:fatty acid derivative biosynthetic process"/>
    <property type="evidence" value="ECO:0007669"/>
    <property type="project" value="Ensembl"/>
</dbReference>
<dbReference type="GO" id="GO:1901571">
    <property type="term" value="P:fatty acid derivative transport"/>
    <property type="evidence" value="ECO:0007669"/>
    <property type="project" value="Ensembl"/>
</dbReference>
<dbReference type="GO" id="GO:0042759">
    <property type="term" value="P:long-chain fatty acid biosynthetic process"/>
    <property type="evidence" value="ECO:0007669"/>
    <property type="project" value="Ensembl"/>
</dbReference>
<dbReference type="GO" id="GO:0015909">
    <property type="term" value="P:long-chain fatty acid transport"/>
    <property type="evidence" value="ECO:0007669"/>
    <property type="project" value="Ensembl"/>
</dbReference>
<dbReference type="GO" id="GO:0007005">
    <property type="term" value="P:mitochondrion organization"/>
    <property type="evidence" value="ECO:0000266"/>
    <property type="project" value="RGD"/>
</dbReference>
<dbReference type="GO" id="GO:0007031">
    <property type="term" value="P:peroxisome organization"/>
    <property type="evidence" value="ECO:0000314"/>
    <property type="project" value="UniProtKB"/>
</dbReference>
<dbReference type="GO" id="GO:0090140">
    <property type="term" value="P:regulation of mitochondrial fission"/>
    <property type="evidence" value="ECO:0000250"/>
    <property type="project" value="UniProtKB"/>
</dbReference>
<dbReference type="GO" id="GO:0002082">
    <property type="term" value="P:regulation of oxidative phosphorylation"/>
    <property type="evidence" value="ECO:0000266"/>
    <property type="project" value="RGD"/>
</dbReference>
<dbReference type="GO" id="GO:0009409">
    <property type="term" value="P:response to cold"/>
    <property type="evidence" value="ECO:0000266"/>
    <property type="project" value="RGD"/>
</dbReference>
<dbReference type="GO" id="GO:0032094">
    <property type="term" value="P:response to food"/>
    <property type="evidence" value="ECO:0000266"/>
    <property type="project" value="RGD"/>
</dbReference>
<dbReference type="GO" id="GO:0003406">
    <property type="term" value="P:retinal pigment epithelium development"/>
    <property type="evidence" value="ECO:0000266"/>
    <property type="project" value="RGD"/>
</dbReference>
<dbReference type="GO" id="GO:0006636">
    <property type="term" value="P:unsaturated fatty acid biosynthetic process"/>
    <property type="evidence" value="ECO:0007669"/>
    <property type="project" value="Ensembl"/>
</dbReference>
<dbReference type="InterPro" id="IPR026749">
    <property type="entry name" value="Tmem135"/>
</dbReference>
<dbReference type="InterPro" id="IPR031926">
    <property type="entry name" value="TMEM135_N"/>
</dbReference>
<dbReference type="PANTHER" id="PTHR12459:SF15">
    <property type="entry name" value="TRANSMEMBRANE PROTEIN 135"/>
    <property type="match status" value="1"/>
</dbReference>
<dbReference type="PANTHER" id="PTHR12459">
    <property type="entry name" value="TRANSMEMBRANE PROTEIN 135-RELATED"/>
    <property type="match status" value="1"/>
</dbReference>
<dbReference type="Pfam" id="PF02466">
    <property type="entry name" value="Tim17"/>
    <property type="match status" value="1"/>
</dbReference>
<dbReference type="Pfam" id="PF15982">
    <property type="entry name" value="TMEM135_C_rich"/>
    <property type="match status" value="1"/>
</dbReference>